<reference key="1">
    <citation type="journal article" date="2007" name="PLoS ONE">
        <title>Genome sequencing shows that European isolates of Francisella tularensis subspecies tularensis are almost identical to US laboratory strain Schu S4.</title>
        <authorList>
            <person name="Chaudhuri R.R."/>
            <person name="Ren C.-P."/>
            <person name="Desmond L."/>
            <person name="Vincent G.A."/>
            <person name="Silman N.J."/>
            <person name="Brehm J.K."/>
            <person name="Elmore M.J."/>
            <person name="Hudson M.J."/>
            <person name="Forsman M."/>
            <person name="Isherwood K.E."/>
            <person name="Gurycova D."/>
            <person name="Minton N.P."/>
            <person name="Titball R.W."/>
            <person name="Pallen M.J."/>
            <person name="Vipond R."/>
        </authorList>
    </citation>
    <scope>NUCLEOTIDE SEQUENCE [LARGE SCALE GENOMIC DNA]</scope>
    <source>
        <strain>FSC 198</strain>
    </source>
</reference>
<gene>
    <name evidence="1" type="primary">rimP</name>
    <name type="ordered locus">FTF0048</name>
</gene>
<evidence type="ECO:0000255" key="1">
    <source>
        <dbReference type="HAMAP-Rule" id="MF_01077"/>
    </source>
</evidence>
<organism>
    <name type="scientific">Francisella tularensis subsp. tularensis (strain FSC 198)</name>
    <dbReference type="NCBI Taxonomy" id="393115"/>
    <lineage>
        <taxon>Bacteria</taxon>
        <taxon>Pseudomonadati</taxon>
        <taxon>Pseudomonadota</taxon>
        <taxon>Gammaproteobacteria</taxon>
        <taxon>Thiotrichales</taxon>
        <taxon>Francisellaceae</taxon>
        <taxon>Francisella</taxon>
    </lineage>
</organism>
<proteinExistence type="inferred from homology"/>
<protein>
    <recommendedName>
        <fullName evidence="1">Ribosome maturation factor RimP</fullName>
    </recommendedName>
</protein>
<keyword id="KW-0963">Cytoplasm</keyword>
<keyword id="KW-0690">Ribosome biogenesis</keyword>
<accession>Q14K22</accession>
<feature type="chain" id="PRO_1000064712" description="Ribosome maturation factor RimP">
    <location>
        <begin position="1"/>
        <end position="152"/>
    </location>
</feature>
<name>RIMP_FRAT1</name>
<sequence length="152" mass="16806">MKMLLDDLYEIVEPITADLGYILWGIEVVGSGKLTIRIFIDHENGVSVDDCQIVSKEISAVFDVEDPVSGKYILEVSSPGMNRQIFNIIQAQALVGFNVKAVTLAPVGSQTKFKGVLERVEGNNVILNLEDGKEISFDFDELKKLRVSPDFS</sequence>
<dbReference type="EMBL" id="AM286280">
    <property type="protein sequence ID" value="CAL08064.1"/>
    <property type="molecule type" value="Genomic_DNA"/>
</dbReference>
<dbReference type="SMR" id="Q14K22"/>
<dbReference type="KEGG" id="ftf:FTF0048"/>
<dbReference type="HOGENOM" id="CLU_070525_1_1_6"/>
<dbReference type="GO" id="GO:0005829">
    <property type="term" value="C:cytosol"/>
    <property type="evidence" value="ECO:0007669"/>
    <property type="project" value="TreeGrafter"/>
</dbReference>
<dbReference type="GO" id="GO:0000028">
    <property type="term" value="P:ribosomal small subunit assembly"/>
    <property type="evidence" value="ECO:0007669"/>
    <property type="project" value="TreeGrafter"/>
</dbReference>
<dbReference type="GO" id="GO:0006412">
    <property type="term" value="P:translation"/>
    <property type="evidence" value="ECO:0007669"/>
    <property type="project" value="TreeGrafter"/>
</dbReference>
<dbReference type="CDD" id="cd01734">
    <property type="entry name" value="YlxS_C"/>
    <property type="match status" value="1"/>
</dbReference>
<dbReference type="FunFam" id="3.30.300.70:FF:000001">
    <property type="entry name" value="Ribosome maturation factor RimP"/>
    <property type="match status" value="1"/>
</dbReference>
<dbReference type="Gene3D" id="2.30.30.180">
    <property type="entry name" value="Ribosome maturation factor RimP, C-terminal domain"/>
    <property type="match status" value="1"/>
</dbReference>
<dbReference type="Gene3D" id="3.30.300.70">
    <property type="entry name" value="RimP-like superfamily, N-terminal"/>
    <property type="match status" value="1"/>
</dbReference>
<dbReference type="HAMAP" id="MF_01077">
    <property type="entry name" value="RimP"/>
    <property type="match status" value="1"/>
</dbReference>
<dbReference type="InterPro" id="IPR003728">
    <property type="entry name" value="Ribosome_maturation_RimP"/>
</dbReference>
<dbReference type="InterPro" id="IPR028998">
    <property type="entry name" value="RimP_C"/>
</dbReference>
<dbReference type="InterPro" id="IPR036847">
    <property type="entry name" value="RimP_C_sf"/>
</dbReference>
<dbReference type="InterPro" id="IPR028989">
    <property type="entry name" value="RimP_N"/>
</dbReference>
<dbReference type="InterPro" id="IPR035956">
    <property type="entry name" value="RimP_N_sf"/>
</dbReference>
<dbReference type="NCBIfam" id="NF011226">
    <property type="entry name" value="PRK14633.1"/>
    <property type="match status" value="1"/>
</dbReference>
<dbReference type="PANTHER" id="PTHR33867">
    <property type="entry name" value="RIBOSOME MATURATION FACTOR RIMP"/>
    <property type="match status" value="1"/>
</dbReference>
<dbReference type="PANTHER" id="PTHR33867:SF1">
    <property type="entry name" value="RIBOSOME MATURATION FACTOR RIMP"/>
    <property type="match status" value="1"/>
</dbReference>
<dbReference type="Pfam" id="PF17384">
    <property type="entry name" value="DUF150_C"/>
    <property type="match status" value="1"/>
</dbReference>
<dbReference type="Pfam" id="PF02576">
    <property type="entry name" value="RimP_N"/>
    <property type="match status" value="1"/>
</dbReference>
<dbReference type="SUPFAM" id="SSF74942">
    <property type="entry name" value="YhbC-like, C-terminal domain"/>
    <property type="match status" value="1"/>
</dbReference>
<dbReference type="SUPFAM" id="SSF75420">
    <property type="entry name" value="YhbC-like, N-terminal domain"/>
    <property type="match status" value="1"/>
</dbReference>
<comment type="function">
    <text evidence="1">Required for maturation of 30S ribosomal subunits.</text>
</comment>
<comment type="subcellular location">
    <subcellularLocation>
        <location evidence="1">Cytoplasm</location>
    </subcellularLocation>
</comment>
<comment type="similarity">
    <text evidence="1">Belongs to the RimP family.</text>
</comment>